<organism>
    <name type="scientific">Xenopus laevis</name>
    <name type="common">African clawed frog</name>
    <dbReference type="NCBI Taxonomy" id="8355"/>
    <lineage>
        <taxon>Eukaryota</taxon>
        <taxon>Metazoa</taxon>
        <taxon>Chordata</taxon>
        <taxon>Craniata</taxon>
        <taxon>Vertebrata</taxon>
        <taxon>Euteleostomi</taxon>
        <taxon>Amphibia</taxon>
        <taxon>Batrachia</taxon>
        <taxon>Anura</taxon>
        <taxon>Pipoidea</taxon>
        <taxon>Pipidae</taxon>
        <taxon>Xenopodinae</taxon>
        <taxon>Xenopus</taxon>
        <taxon>Xenopus</taxon>
    </lineage>
</organism>
<reference key="1">
    <citation type="submission" date="2004-06" db="EMBL/GenBank/DDBJ databases">
        <authorList>
            <consortium name="NIH - Xenopus Gene Collection (XGC) project"/>
        </authorList>
    </citation>
    <scope>NUCLEOTIDE SEQUENCE [LARGE SCALE MRNA]</scope>
    <source>
        <tissue>Embryo</tissue>
    </source>
</reference>
<reference key="2">
    <citation type="journal article" date="2017" name="J. Biol. Chem.">
        <title>Dual roles of Akirin2 protein during Xenopus neural development.</title>
        <authorList>
            <person name="Liu X."/>
            <person name="Xia Y."/>
            <person name="Tang J."/>
            <person name="Ma L."/>
            <person name="Li C."/>
            <person name="Ma P."/>
            <person name="Mao B."/>
        </authorList>
    </citation>
    <scope>FUNCTION</scope>
    <scope>INTERACTION WITH ACTL6A AND GMNN</scope>
</reference>
<dbReference type="EMBL" id="BC072831">
    <property type="protein sequence ID" value="AAH72831.1"/>
    <property type="molecule type" value="mRNA"/>
</dbReference>
<dbReference type="RefSeq" id="NP_001085484.1">
    <property type="nucleotide sequence ID" value="NM_001092015.1"/>
</dbReference>
<dbReference type="SMR" id="Q6GQB5"/>
<dbReference type="DNASU" id="443910"/>
<dbReference type="GeneID" id="443910"/>
<dbReference type="KEGG" id="xla:443910"/>
<dbReference type="AGR" id="Xenbase:XB-GENE-951500"/>
<dbReference type="CTD" id="443910"/>
<dbReference type="Xenbase" id="XB-GENE-951500">
    <property type="gene designation" value="akirin2.S"/>
</dbReference>
<dbReference type="OrthoDB" id="10039914at2759"/>
<dbReference type="Proteomes" id="UP000186698">
    <property type="component" value="Chromosome 5S"/>
</dbReference>
<dbReference type="Bgee" id="443910">
    <property type="expression patterns" value="Expressed in blastula and 19 other cell types or tissues"/>
</dbReference>
<dbReference type="GO" id="GO:0000785">
    <property type="term" value="C:chromatin"/>
    <property type="evidence" value="ECO:0000318"/>
    <property type="project" value="GO_Central"/>
</dbReference>
<dbReference type="GO" id="GO:0005634">
    <property type="term" value="C:nucleus"/>
    <property type="evidence" value="ECO:0000318"/>
    <property type="project" value="GO_Central"/>
</dbReference>
<dbReference type="GO" id="GO:0030674">
    <property type="term" value="F:protein-macromolecule adaptor activity"/>
    <property type="evidence" value="ECO:0000314"/>
    <property type="project" value="UniProtKB"/>
</dbReference>
<dbReference type="GO" id="GO:0003712">
    <property type="term" value="F:transcription coregulator activity"/>
    <property type="evidence" value="ECO:0000318"/>
    <property type="project" value="GO_Central"/>
</dbReference>
<dbReference type="GO" id="GO:0022008">
    <property type="term" value="P:neurogenesis"/>
    <property type="evidence" value="ECO:0000314"/>
    <property type="project" value="UniProtKB"/>
</dbReference>
<dbReference type="GO" id="GO:0045089">
    <property type="term" value="P:positive regulation of innate immune response"/>
    <property type="evidence" value="ECO:0000318"/>
    <property type="project" value="GO_Central"/>
</dbReference>
<dbReference type="GO" id="GO:0045944">
    <property type="term" value="P:positive regulation of transcription by RNA polymerase II"/>
    <property type="evidence" value="ECO:0000318"/>
    <property type="project" value="GO_Central"/>
</dbReference>
<dbReference type="GO" id="GO:0015031">
    <property type="term" value="P:protein transport"/>
    <property type="evidence" value="ECO:0007669"/>
    <property type="project" value="UniProtKB-KW"/>
</dbReference>
<dbReference type="CDD" id="cd22244">
    <property type="entry name" value="akirin-2"/>
    <property type="match status" value="1"/>
</dbReference>
<dbReference type="InterPro" id="IPR024132">
    <property type="entry name" value="Akirin"/>
</dbReference>
<dbReference type="PANTHER" id="PTHR13293:SF8">
    <property type="entry name" value="AKIRIN-2"/>
    <property type="match status" value="1"/>
</dbReference>
<dbReference type="PANTHER" id="PTHR13293">
    <property type="entry name" value="AKIRIN-RELATED"/>
    <property type="match status" value="1"/>
</dbReference>
<name>AKIR2_XENLA</name>
<proteinExistence type="evidence at protein level"/>
<sequence>MACGATLKRTIEFDPLLSPAASPKRRRCAPLSPSGPSPQKYLRLEPSPFGEVSPRLTAEQILYNIKQEYKRMQKRRHLESSFQPTDPCCSSEGQPQTFIPSGPTLPGTSATSPLRKEQPLFSLRQVGMICERLLKEREDNVREEYEEILTTKLAEQYDAFVKFTHDQIMRRFGEQPASYVS</sequence>
<evidence type="ECO:0000250" key="1">
    <source>
        <dbReference type="UniProtKB" id="B1AXD8"/>
    </source>
</evidence>
<evidence type="ECO:0000250" key="2">
    <source>
        <dbReference type="UniProtKB" id="Q53H80"/>
    </source>
</evidence>
<evidence type="ECO:0000256" key="3">
    <source>
        <dbReference type="SAM" id="MobiDB-lite"/>
    </source>
</evidence>
<evidence type="ECO:0000269" key="4">
    <source>
    </source>
</evidence>
<evidence type="ECO:0000303" key="5">
    <source>
    </source>
</evidence>
<evidence type="ECO:0000305" key="6"/>
<evidence type="ECO:0000312" key="7">
    <source>
        <dbReference type="Xenbase" id="XB-GENE-951500"/>
    </source>
</evidence>
<accession>Q6GQB5</accession>
<feature type="chain" id="PRO_0000455441" description="Akirin-2">
    <location>
        <begin position="1"/>
        <end position="181"/>
    </location>
</feature>
<feature type="region of interest" description="Disordered" evidence="3">
    <location>
        <begin position="18"/>
        <end position="48"/>
    </location>
</feature>
<feature type="short sequence motif" description="Nuclear localization signal" evidence="2">
    <location>
        <begin position="23"/>
        <end position="28"/>
    </location>
</feature>
<feature type="short sequence motif" description="SYVS motif" evidence="2">
    <location>
        <begin position="178"/>
        <end position="181"/>
    </location>
</feature>
<protein>
    <recommendedName>
        <fullName evidence="5">Akirin-2</fullName>
        <shortName evidence="5">XAkirin2</shortName>
    </recommendedName>
</protein>
<comment type="function">
    <text evidence="1 2 4">Molecular adapter that acts as a bridge between a variety of multiprotein complexes, and which is involved in embryonic development, immunity, myogenesis and brain development (PubMed:28193841). Plays a key role in nuclear protein degradation by promoting import of proteasomes into the nucleus: acts by bridging fully assembled 20S proteasomes with nuclear import receptor ipo9 (By similarity). Involved in both neural precursor maintenance and terminal neural differentiation: bridges gmnn and actl6a/baf53a in neural progenitor cells, antagonizing the activity of gmnn, thereby suppressing sox2 expression (PubMed:28193841). Also required for proper activation of neurod1 and neuronal differentiation (PubMed:28193841). Involved in myogenesis: required for skeletal muscle formation and skeletal development, possibly by regulating expression of muscle differentiation factors (By similarity).</text>
</comment>
<comment type="subunit">
    <text evidence="2 4">Homodimer (By similarity). Interacts with actl6a/baf53a (PubMed:28193841). Interacts with gmnn (PubMed:28193841).</text>
</comment>
<comment type="subcellular location">
    <subcellularLocation>
        <location evidence="1">Nucleus</location>
    </subcellularLocation>
</comment>
<comment type="similarity">
    <text evidence="6">Belongs to the akirin family.</text>
</comment>
<keyword id="KW-0217">Developmental protein</keyword>
<keyword id="KW-0539">Nucleus</keyword>
<keyword id="KW-0653">Protein transport</keyword>
<keyword id="KW-1185">Reference proteome</keyword>
<keyword id="KW-0678">Repressor</keyword>
<keyword id="KW-0804">Transcription</keyword>
<keyword id="KW-0805">Transcription regulation</keyword>
<keyword id="KW-0813">Transport</keyword>
<gene>
    <name evidence="7" type="primary">akirin2.S</name>
    <name evidence="5" type="synonym">akirin2</name>
</gene>